<name>KLRA2_MOUSE</name>
<gene>
    <name type="primary">Klra2</name>
    <name type="synonym">Ly49-b</name>
    <name type="synonym">Ly49b</name>
</gene>
<reference key="1">
    <citation type="journal article" date="1991" name="J. Immunol.">
        <title>Ly-49 multigene family. New members of a superfamily of type II membrane proteins with lectin-like domains.</title>
        <authorList>
            <person name="Wong S."/>
            <person name="Freeman J.D."/>
            <person name="Kelleher C."/>
            <person name="Mager D."/>
            <person name="Takei F."/>
        </authorList>
    </citation>
    <scope>NUCLEOTIDE SEQUENCE [MRNA]</scope>
    <source>
        <strain>C57BL/6 X CBA</strain>
        <tissue>Lung</tissue>
    </source>
</reference>
<evidence type="ECO:0000255" key="1"/>
<evidence type="ECO:0000255" key="2">
    <source>
        <dbReference type="PROSITE-ProRule" id="PRU00040"/>
    </source>
</evidence>
<keyword id="KW-0130">Cell adhesion</keyword>
<keyword id="KW-1015">Disulfide bond</keyword>
<keyword id="KW-0325">Glycoprotein</keyword>
<keyword id="KW-0430">Lectin</keyword>
<keyword id="KW-0472">Membrane</keyword>
<keyword id="KW-0675">Receptor</keyword>
<keyword id="KW-1185">Reference proteome</keyword>
<keyword id="KW-0735">Signal-anchor</keyword>
<keyword id="KW-0812">Transmembrane</keyword>
<keyword id="KW-1133">Transmembrane helix</keyword>
<organism>
    <name type="scientific">Mus musculus</name>
    <name type="common">Mouse</name>
    <dbReference type="NCBI Taxonomy" id="10090"/>
    <lineage>
        <taxon>Eukaryota</taxon>
        <taxon>Metazoa</taxon>
        <taxon>Chordata</taxon>
        <taxon>Craniata</taxon>
        <taxon>Vertebrata</taxon>
        <taxon>Euteleostomi</taxon>
        <taxon>Mammalia</taxon>
        <taxon>Eutheria</taxon>
        <taxon>Euarchontoglires</taxon>
        <taxon>Glires</taxon>
        <taxon>Rodentia</taxon>
        <taxon>Myomorpha</taxon>
        <taxon>Muroidea</taxon>
        <taxon>Muridae</taxon>
        <taxon>Murinae</taxon>
        <taxon>Mus</taxon>
        <taxon>Mus</taxon>
    </lineage>
</organism>
<dbReference type="EMBL" id="U10304">
    <property type="protein sequence ID" value="AAA19052.1"/>
    <property type="molecule type" value="mRNA"/>
</dbReference>
<dbReference type="CCDS" id="CCDS20603.1"/>
<dbReference type="PIR" id="I49058">
    <property type="entry name" value="I49058"/>
</dbReference>
<dbReference type="SMR" id="Q60660"/>
<dbReference type="FunCoup" id="Q60660">
    <property type="interactions" value="586"/>
</dbReference>
<dbReference type="STRING" id="10090.ENSMUSP00000086252"/>
<dbReference type="GlyCosmos" id="Q60660">
    <property type="glycosylation" value="4 sites, No reported glycans"/>
</dbReference>
<dbReference type="GlyGen" id="Q60660">
    <property type="glycosylation" value="6 sites, 1 N-linked glycan (1 site)"/>
</dbReference>
<dbReference type="iPTMnet" id="Q60660"/>
<dbReference type="PhosphoSitePlus" id="Q60660"/>
<dbReference type="ProteomicsDB" id="263634"/>
<dbReference type="AGR" id="MGI:101906"/>
<dbReference type="MGI" id="MGI:101906">
    <property type="gene designation" value="Klra2"/>
</dbReference>
<dbReference type="InParanoid" id="Q60660"/>
<dbReference type="OrthoDB" id="2142683at2759"/>
<dbReference type="PhylomeDB" id="Q60660"/>
<dbReference type="PRO" id="PR:Q60660"/>
<dbReference type="Proteomes" id="UP000000589">
    <property type="component" value="Unplaced"/>
</dbReference>
<dbReference type="RNAct" id="Q60660">
    <property type="molecule type" value="protein"/>
</dbReference>
<dbReference type="GO" id="GO:0005886">
    <property type="term" value="C:plasma membrane"/>
    <property type="evidence" value="ECO:0000304"/>
    <property type="project" value="MGI"/>
</dbReference>
<dbReference type="GO" id="GO:0030246">
    <property type="term" value="F:carbohydrate binding"/>
    <property type="evidence" value="ECO:0007669"/>
    <property type="project" value="UniProtKB-KW"/>
</dbReference>
<dbReference type="GO" id="GO:0007155">
    <property type="term" value="P:cell adhesion"/>
    <property type="evidence" value="ECO:0007669"/>
    <property type="project" value="UniProtKB-KW"/>
</dbReference>
<dbReference type="CDD" id="cd03593">
    <property type="entry name" value="CLECT_NK_receptors_like"/>
    <property type="match status" value="1"/>
</dbReference>
<dbReference type="FunFam" id="3.10.100.10:FF:000053">
    <property type="entry name" value="Killer cell lectin-like receptor 3"/>
    <property type="match status" value="1"/>
</dbReference>
<dbReference type="Gene3D" id="3.10.100.10">
    <property type="entry name" value="Mannose-Binding Protein A, subunit A"/>
    <property type="match status" value="1"/>
</dbReference>
<dbReference type="InterPro" id="IPR001304">
    <property type="entry name" value="C-type_lectin-like"/>
</dbReference>
<dbReference type="InterPro" id="IPR016186">
    <property type="entry name" value="C-type_lectin-like/link_sf"/>
</dbReference>
<dbReference type="InterPro" id="IPR016187">
    <property type="entry name" value="CTDL_fold"/>
</dbReference>
<dbReference type="InterPro" id="IPR013600">
    <property type="entry name" value="Ly49_N"/>
</dbReference>
<dbReference type="InterPro" id="IPR052013">
    <property type="entry name" value="Mouse_KLRs"/>
</dbReference>
<dbReference type="InterPro" id="IPR033992">
    <property type="entry name" value="NKR-like_CTLD"/>
</dbReference>
<dbReference type="PANTHER" id="PTHR46329">
    <property type="entry name" value="KILLER CELL LECTIN-LIKE RECEPTOR 2"/>
    <property type="match status" value="1"/>
</dbReference>
<dbReference type="PANTHER" id="PTHR46329:SF1">
    <property type="entry name" value="KILLER CELL LECTIN-LIKE RECEPTOR 2"/>
    <property type="match status" value="1"/>
</dbReference>
<dbReference type="Pfam" id="PF00059">
    <property type="entry name" value="Lectin_C"/>
    <property type="match status" value="1"/>
</dbReference>
<dbReference type="Pfam" id="PF08391">
    <property type="entry name" value="Ly49"/>
    <property type="match status" value="1"/>
</dbReference>
<dbReference type="SMART" id="SM00034">
    <property type="entry name" value="CLECT"/>
    <property type="match status" value="1"/>
</dbReference>
<dbReference type="SUPFAM" id="SSF56436">
    <property type="entry name" value="C-type lectin-like"/>
    <property type="match status" value="1"/>
</dbReference>
<dbReference type="PROSITE" id="PS50041">
    <property type="entry name" value="C_TYPE_LECTIN_2"/>
    <property type="match status" value="1"/>
</dbReference>
<sequence>MSEQEVTYTTLRFHKSSGLQNPVRPEETQRPRDVGHRECSVPWKFIVIVLGILCFLLLLTVAVLVIHIFRDGQEKHEQEKTLNNLRQEYQVMKNDSSLMEEMLRNKSSECKALNDSLHYLNREQNRCLRKTKIVLDCSQNKGKQVEGYWFCCGMKCYYFIMDDKKWNGCKQICQDYNLTLLKTNDEDELKFLKSQLQRNTYWISLTHHKSKEESQQIGDRPSKLDSAARNSVPNRQKCAYLSSFSTEEDDCARTHGCICEKRLNKFPIPGSCAKGRTQSALQRDEDES</sequence>
<comment type="function">
    <text>Receptor on natural killer (NK) cells for class I MHC.</text>
</comment>
<comment type="subunit">
    <text>Homodimer; disulfide-linked.</text>
</comment>
<comment type="subcellular location">
    <subcellularLocation>
        <location>Membrane</location>
        <topology>Single-pass type II membrane protein</topology>
    </subcellularLocation>
</comment>
<feature type="chain" id="PRO_0000046680" description="Killer cell lectin-like receptor 2">
    <location>
        <begin position="1"/>
        <end position="288"/>
    </location>
</feature>
<feature type="topological domain" description="Cytoplasmic" evidence="1">
    <location>
        <begin position="1"/>
        <end position="45"/>
    </location>
</feature>
<feature type="transmembrane region" description="Helical; Signal-anchor for type II membrane protein" evidence="1">
    <location>
        <begin position="46"/>
        <end position="66"/>
    </location>
</feature>
<feature type="topological domain" description="Extracellular" evidence="1">
    <location>
        <begin position="67"/>
        <end position="288"/>
    </location>
</feature>
<feature type="domain" description="C-type lectin" evidence="2">
    <location>
        <begin position="144"/>
        <end position="263"/>
    </location>
</feature>
<feature type="glycosylation site" description="N-linked (GlcNAc...) asparagine" evidence="1">
    <location>
        <position position="94"/>
    </location>
</feature>
<feature type="glycosylation site" description="N-linked (GlcNAc...) asparagine" evidence="1">
    <location>
        <position position="105"/>
    </location>
</feature>
<feature type="glycosylation site" description="N-linked (GlcNAc...) asparagine" evidence="1">
    <location>
        <position position="114"/>
    </location>
</feature>
<feature type="glycosylation site" description="N-linked (GlcNAc...) asparagine" evidence="1">
    <location>
        <position position="177"/>
    </location>
</feature>
<feature type="disulfide bond" evidence="2">
    <location>
        <begin position="151"/>
        <end position="156"/>
    </location>
</feature>
<feature type="disulfide bond" evidence="2">
    <location>
        <begin position="169"/>
        <end position="257"/>
    </location>
</feature>
<feature type="disulfide bond" evidence="2">
    <location>
        <begin position="173"/>
        <end position="259"/>
    </location>
</feature>
<feature type="disulfide bond" evidence="2">
    <location>
        <begin position="238"/>
        <end position="251"/>
    </location>
</feature>
<accession>Q60660</accession>
<protein>
    <recommendedName>
        <fullName>Killer cell lectin-like receptor 2</fullName>
    </recommendedName>
    <alternativeName>
        <fullName>Lymphocyte antigen 49b</fullName>
        <shortName>Ly-49b</shortName>
    </alternativeName>
    <alternativeName>
        <fullName>T-cell surface glycoprotein Ly-49B</fullName>
    </alternativeName>
</protein>
<proteinExistence type="evidence at transcript level"/>